<accession>Q9HV75</accession>
<accession>Q7DID3</accession>
<protein>
    <recommendedName>
        <fullName evidence="1">Glutamyl-Q tRNA(Asp) synthetase</fullName>
        <shortName evidence="1">Glu-Q-RSs</shortName>
        <ecNumber evidence="1">6.1.1.-</ecNumber>
    </recommendedName>
</protein>
<organism>
    <name type="scientific">Pseudomonas aeruginosa (strain ATCC 15692 / DSM 22644 / CIP 104116 / JCM 14847 / LMG 12228 / 1C / PRS 101 / PAO1)</name>
    <dbReference type="NCBI Taxonomy" id="208964"/>
    <lineage>
        <taxon>Bacteria</taxon>
        <taxon>Pseudomonadati</taxon>
        <taxon>Pseudomonadota</taxon>
        <taxon>Gammaproteobacteria</taxon>
        <taxon>Pseudomonadales</taxon>
        <taxon>Pseudomonadaceae</taxon>
        <taxon>Pseudomonas</taxon>
    </lineage>
</organism>
<feature type="chain" id="PRO_0000208314" description="Glutamyl-Q tRNA(Asp) synthetase">
    <location>
        <begin position="1"/>
        <end position="293"/>
    </location>
</feature>
<feature type="short sequence motif" description="'HIGH' region">
    <location>
        <begin position="11"/>
        <end position="21"/>
    </location>
</feature>
<feature type="short sequence motif" description="'KMSKS' region">
    <location>
        <begin position="227"/>
        <end position="231"/>
    </location>
</feature>
<feature type="binding site" evidence="1">
    <location>
        <begin position="8"/>
        <end position="12"/>
    </location>
    <ligand>
        <name>L-glutamate</name>
        <dbReference type="ChEBI" id="CHEBI:29985"/>
    </ligand>
</feature>
<feature type="binding site" evidence="1">
    <location>
        <position position="44"/>
    </location>
    <ligand>
        <name>L-glutamate</name>
        <dbReference type="ChEBI" id="CHEBI:29985"/>
    </ligand>
</feature>
<feature type="binding site" evidence="1">
    <location>
        <position position="100"/>
    </location>
    <ligand>
        <name>Zn(2+)</name>
        <dbReference type="ChEBI" id="CHEBI:29105"/>
    </ligand>
</feature>
<feature type="binding site" evidence="1">
    <location>
        <position position="102"/>
    </location>
    <ligand>
        <name>Zn(2+)</name>
        <dbReference type="ChEBI" id="CHEBI:29105"/>
    </ligand>
</feature>
<feature type="binding site" evidence="1">
    <location>
        <position position="114"/>
    </location>
    <ligand>
        <name>Zn(2+)</name>
        <dbReference type="ChEBI" id="CHEBI:29105"/>
    </ligand>
</feature>
<feature type="binding site" evidence="1">
    <location>
        <position position="118"/>
    </location>
    <ligand>
        <name>Zn(2+)</name>
        <dbReference type="ChEBI" id="CHEBI:29105"/>
    </ligand>
</feature>
<feature type="binding site" evidence="1">
    <location>
        <position position="171"/>
    </location>
    <ligand>
        <name>L-glutamate</name>
        <dbReference type="ChEBI" id="CHEBI:29985"/>
    </ligand>
</feature>
<feature type="binding site" evidence="1">
    <location>
        <position position="189"/>
    </location>
    <ligand>
        <name>L-glutamate</name>
        <dbReference type="ChEBI" id="CHEBI:29985"/>
    </ligand>
</feature>
<feature type="binding site" evidence="1">
    <location>
        <position position="230"/>
    </location>
    <ligand>
        <name>ATP</name>
        <dbReference type="ChEBI" id="CHEBI:30616"/>
    </ligand>
</feature>
<name>GLUQ_PSEAE</name>
<keyword id="KW-0030">Aminoacyl-tRNA synthetase</keyword>
<keyword id="KW-0067">ATP-binding</keyword>
<keyword id="KW-0436">Ligase</keyword>
<keyword id="KW-0479">Metal-binding</keyword>
<keyword id="KW-0547">Nucleotide-binding</keyword>
<keyword id="KW-1185">Reference proteome</keyword>
<keyword id="KW-0862">Zinc</keyword>
<reference key="1">
    <citation type="journal article" date="2001" name="Mol. Microbiol.">
        <title>The CbrA-CbrB two-component regulatory system controls the utilization of multiple carbon and nitrogen sources in Pseudomonas aeruginosa.</title>
        <authorList>
            <person name="Hishijyo T."/>
            <person name="Haas D."/>
            <person name="Itoh Y."/>
        </authorList>
    </citation>
    <scope>NUCLEOTIDE SEQUENCE [GENOMIC DNA]</scope>
    <source>
        <strain>ATCC 15692 / DSM 22644 / CIP 104116 / JCM 14847 / LMG 12228 / 1C / PRS 101 / PAO1</strain>
    </source>
</reference>
<reference key="2">
    <citation type="journal article" date="2000" name="Nature">
        <title>Complete genome sequence of Pseudomonas aeruginosa PAO1, an opportunistic pathogen.</title>
        <authorList>
            <person name="Stover C.K."/>
            <person name="Pham X.-Q.T."/>
            <person name="Erwin A.L."/>
            <person name="Mizoguchi S.D."/>
            <person name="Warrener P."/>
            <person name="Hickey M.J."/>
            <person name="Brinkman F.S.L."/>
            <person name="Hufnagle W.O."/>
            <person name="Kowalik D.J."/>
            <person name="Lagrou M."/>
            <person name="Garber R.L."/>
            <person name="Goltry L."/>
            <person name="Tolentino E."/>
            <person name="Westbrock-Wadman S."/>
            <person name="Yuan Y."/>
            <person name="Brody L.L."/>
            <person name="Coulter S.N."/>
            <person name="Folger K.R."/>
            <person name="Kas A."/>
            <person name="Larbig K."/>
            <person name="Lim R.M."/>
            <person name="Smith K.A."/>
            <person name="Spencer D.H."/>
            <person name="Wong G.K.-S."/>
            <person name="Wu Z."/>
            <person name="Paulsen I.T."/>
            <person name="Reizer J."/>
            <person name="Saier M.H. Jr."/>
            <person name="Hancock R.E.W."/>
            <person name="Lory S."/>
            <person name="Olson M.V."/>
        </authorList>
    </citation>
    <scope>NUCLEOTIDE SEQUENCE [LARGE SCALE GENOMIC DNA]</scope>
    <source>
        <strain>ATCC 15692 / DSM 22644 / CIP 104116 / JCM 14847 / LMG 12228 / 1C / PRS 101 / PAO1</strain>
    </source>
</reference>
<dbReference type="EC" id="6.1.1.-" evidence="1"/>
<dbReference type="EMBL" id="AB045630">
    <property type="protein sequence ID" value="BAB20865.1"/>
    <property type="molecule type" value="Genomic_DNA"/>
</dbReference>
<dbReference type="EMBL" id="AE004091">
    <property type="protein sequence ID" value="AAG08110.1"/>
    <property type="molecule type" value="Genomic_DNA"/>
</dbReference>
<dbReference type="PIR" id="A83055">
    <property type="entry name" value="A83055"/>
</dbReference>
<dbReference type="RefSeq" id="NP_253412.1">
    <property type="nucleotide sequence ID" value="NC_002516.2"/>
</dbReference>
<dbReference type="SMR" id="Q9HV75"/>
<dbReference type="FunCoup" id="Q9HV75">
    <property type="interactions" value="46"/>
</dbReference>
<dbReference type="STRING" id="208964.PA4724"/>
<dbReference type="PaxDb" id="208964-PA4724"/>
<dbReference type="GeneID" id="881601"/>
<dbReference type="KEGG" id="pae:PA4724"/>
<dbReference type="PATRIC" id="fig|208964.12.peg.4948"/>
<dbReference type="PseudoCAP" id="PA4724"/>
<dbReference type="HOGENOM" id="CLU_015768_0_1_6"/>
<dbReference type="InParanoid" id="Q9HV75"/>
<dbReference type="OrthoDB" id="9807503at2"/>
<dbReference type="PhylomeDB" id="Q9HV75"/>
<dbReference type="BioCyc" id="PAER208964:G1FZ6-4830-MONOMER"/>
<dbReference type="Proteomes" id="UP000002438">
    <property type="component" value="Chromosome"/>
</dbReference>
<dbReference type="GO" id="GO:0005829">
    <property type="term" value="C:cytosol"/>
    <property type="evidence" value="ECO:0000318"/>
    <property type="project" value="GO_Central"/>
</dbReference>
<dbReference type="GO" id="GO:0005524">
    <property type="term" value="F:ATP binding"/>
    <property type="evidence" value="ECO:0007669"/>
    <property type="project" value="UniProtKB-KW"/>
</dbReference>
<dbReference type="GO" id="GO:0004818">
    <property type="term" value="F:glutamate-tRNA ligase activity"/>
    <property type="evidence" value="ECO:0000318"/>
    <property type="project" value="GO_Central"/>
</dbReference>
<dbReference type="GO" id="GO:0008270">
    <property type="term" value="F:zinc ion binding"/>
    <property type="evidence" value="ECO:0007669"/>
    <property type="project" value="UniProtKB-UniRule"/>
</dbReference>
<dbReference type="GO" id="GO:0006424">
    <property type="term" value="P:glutamyl-tRNA aminoacylation"/>
    <property type="evidence" value="ECO:0000318"/>
    <property type="project" value="GO_Central"/>
</dbReference>
<dbReference type="GO" id="GO:0006400">
    <property type="term" value="P:tRNA modification"/>
    <property type="evidence" value="ECO:0007669"/>
    <property type="project" value="InterPro"/>
</dbReference>
<dbReference type="FunFam" id="3.40.50.620:FF:000093">
    <property type="entry name" value="Glutamyl-Q tRNA(Asp) synthetase"/>
    <property type="match status" value="1"/>
</dbReference>
<dbReference type="Gene3D" id="3.40.50.620">
    <property type="entry name" value="HUPs"/>
    <property type="match status" value="1"/>
</dbReference>
<dbReference type="HAMAP" id="MF_01428">
    <property type="entry name" value="Glu_Q_tRNA_synth"/>
    <property type="match status" value="1"/>
</dbReference>
<dbReference type="InterPro" id="IPR022380">
    <property type="entry name" value="Glu-Q_tRNA(Asp)_Synthase"/>
</dbReference>
<dbReference type="InterPro" id="IPR000924">
    <property type="entry name" value="Glu/Gln-tRNA-synth"/>
</dbReference>
<dbReference type="InterPro" id="IPR020058">
    <property type="entry name" value="Glu/Gln-tRNA-synth_Ib_cat-dom"/>
</dbReference>
<dbReference type="InterPro" id="IPR049940">
    <property type="entry name" value="GluQ/Sye"/>
</dbReference>
<dbReference type="InterPro" id="IPR014729">
    <property type="entry name" value="Rossmann-like_a/b/a_fold"/>
</dbReference>
<dbReference type="NCBIfam" id="NF004314">
    <property type="entry name" value="PRK05710.1-3"/>
    <property type="match status" value="1"/>
</dbReference>
<dbReference type="NCBIfam" id="TIGR03838">
    <property type="entry name" value="queuosine_YadB"/>
    <property type="match status" value="1"/>
</dbReference>
<dbReference type="PANTHER" id="PTHR43311">
    <property type="entry name" value="GLUTAMATE--TRNA LIGASE"/>
    <property type="match status" value="1"/>
</dbReference>
<dbReference type="PANTHER" id="PTHR43311:SF1">
    <property type="entry name" value="GLUTAMYL-Q TRNA(ASP) SYNTHETASE"/>
    <property type="match status" value="1"/>
</dbReference>
<dbReference type="Pfam" id="PF00749">
    <property type="entry name" value="tRNA-synt_1c"/>
    <property type="match status" value="2"/>
</dbReference>
<dbReference type="PRINTS" id="PR00987">
    <property type="entry name" value="TRNASYNTHGLU"/>
</dbReference>
<dbReference type="SUPFAM" id="SSF52374">
    <property type="entry name" value="Nucleotidylyl transferase"/>
    <property type="match status" value="1"/>
</dbReference>
<gene>
    <name evidence="1" type="primary">gluQ</name>
    <name type="ordered locus">PA4724</name>
</gene>
<evidence type="ECO:0000255" key="1">
    <source>
        <dbReference type="HAMAP-Rule" id="MF_01428"/>
    </source>
</evidence>
<proteinExistence type="inferred from homology"/>
<sequence length="293" mass="32507">MTSSYVGRFAPTPSGYLHFGSLVAAVASYLDARAVGGRWLVRMEDLDPPREVPGAQQAILETLERYGFEWDGAVERQSERFPAYAAVVEQLLRSGLAYACTCSRKQLEGFAGIYPGFCRDAGHAREDAAIRLRVPELEYRFVDRVQGEVRQHLGREVGDFVIQRRDGLYAYQLAVVLDDAWQGITDIVRGADLLDSTPRQLYLQELLGLSQPRYLHVPLIVQPDGHKLGKSYRSPPLPAEQAAAPLTRALRALGQRPPAELAQASASEALAWGVAHWDATRIPRCATLPEERL</sequence>
<comment type="function">
    <text evidence="1">Catalyzes the tRNA-independent activation of glutamate in presence of ATP and the subsequent transfer of glutamate onto a tRNA(Asp). Glutamate is transferred on the 2-amino-5-(4,5-dihydroxy-2-cyclopenten-1-yl) moiety of the queuosine in the wobble position of the QUC anticodon.</text>
</comment>
<comment type="cofactor">
    <cofactor evidence="1">
        <name>Zn(2+)</name>
        <dbReference type="ChEBI" id="CHEBI:29105"/>
    </cofactor>
    <text evidence="1">Binds 1 zinc ion per subunit.</text>
</comment>
<comment type="similarity">
    <text evidence="1">Belongs to the class-I aminoacyl-tRNA synthetase family. GluQ subfamily.</text>
</comment>